<proteinExistence type="inferred from homology"/>
<organism>
    <name type="scientific">Synechococcus elongatus (strain ATCC 33912 / PCC 7942 / FACHB-805)</name>
    <name type="common">Anacystis nidulans R2</name>
    <dbReference type="NCBI Taxonomy" id="1140"/>
    <lineage>
        <taxon>Bacteria</taxon>
        <taxon>Bacillati</taxon>
        <taxon>Cyanobacteriota</taxon>
        <taxon>Cyanophyceae</taxon>
        <taxon>Synechococcales</taxon>
        <taxon>Synechococcaceae</taxon>
        <taxon>Synechococcus</taxon>
    </lineage>
</organism>
<gene>
    <name evidence="1 3" type="primary">bioA</name>
    <name type="ordered locus">Synpcc7942_0031</name>
</gene>
<feature type="chain" id="PRO_0000450577" description="Adenosylmethionine-8-amino-7-oxononanoate aminotransferase">
    <location>
        <begin position="1"/>
        <end position="424"/>
    </location>
</feature>
<feature type="binding site" evidence="1">
    <location>
        <position position="46"/>
    </location>
    <ligand>
        <name>substrate</name>
    </ligand>
</feature>
<feature type="binding site" evidence="1">
    <location>
        <begin position="106"/>
        <end position="107"/>
    </location>
    <ligand>
        <name>pyridoxal 5'-phosphate</name>
        <dbReference type="ChEBI" id="CHEBI:597326"/>
    </ligand>
</feature>
<feature type="binding site" evidence="1">
    <location>
        <position position="138"/>
    </location>
    <ligand>
        <name>substrate</name>
    </ligand>
</feature>
<feature type="binding site" evidence="1">
    <location>
        <position position="240"/>
    </location>
    <ligand>
        <name>pyridoxal 5'-phosphate</name>
        <dbReference type="ChEBI" id="CHEBI:597326"/>
    </ligand>
</feature>
<feature type="binding site" evidence="1">
    <location>
        <position position="269"/>
    </location>
    <ligand>
        <name>substrate</name>
    </ligand>
</feature>
<feature type="binding site" evidence="1">
    <location>
        <position position="303"/>
    </location>
    <ligand>
        <name>substrate</name>
    </ligand>
</feature>
<feature type="binding site" evidence="1">
    <location>
        <begin position="304"/>
        <end position="305"/>
    </location>
    <ligand>
        <name>pyridoxal 5'-phosphate</name>
        <dbReference type="ChEBI" id="CHEBI:597326"/>
    </ligand>
</feature>
<feature type="binding site" evidence="1">
    <location>
        <position position="391"/>
    </location>
    <ligand>
        <name>substrate</name>
    </ligand>
</feature>
<feature type="site" description="Participates in the substrate recognition with KAPA and in a stacking interaction with the adenine ring of SAM" evidence="1">
    <location>
        <position position="11"/>
    </location>
</feature>
<feature type="modified residue" description="N6-(pyridoxal phosphate)lysine" evidence="1">
    <location>
        <position position="269"/>
    </location>
</feature>
<evidence type="ECO:0000255" key="1">
    <source>
        <dbReference type="HAMAP-Rule" id="MF_00834"/>
    </source>
</evidence>
<evidence type="ECO:0000269" key="2">
    <source>
    </source>
</evidence>
<evidence type="ECO:0000303" key="3">
    <source>
    </source>
</evidence>
<dbReference type="EC" id="2.6.1.62" evidence="1"/>
<dbReference type="EMBL" id="CP000100">
    <property type="protein sequence ID" value="ABB56063.1"/>
    <property type="molecule type" value="Genomic_DNA"/>
</dbReference>
<dbReference type="RefSeq" id="WP_011243776.1">
    <property type="nucleotide sequence ID" value="NZ_JACJTX010000002.1"/>
</dbReference>
<dbReference type="SMR" id="Q31SA6"/>
<dbReference type="STRING" id="1140.Synpcc7942_0031"/>
<dbReference type="PaxDb" id="1140-Synpcc7942_0031"/>
<dbReference type="GeneID" id="72428840"/>
<dbReference type="KEGG" id="syf:Synpcc7942_0031"/>
<dbReference type="eggNOG" id="COG0161">
    <property type="taxonomic scope" value="Bacteria"/>
</dbReference>
<dbReference type="HOGENOM" id="CLU_016922_4_3_3"/>
<dbReference type="OrthoDB" id="9807885at2"/>
<dbReference type="BioCyc" id="SYNEL:SYNPCC7942_0031-MONOMER"/>
<dbReference type="UniPathway" id="UPA00078">
    <property type="reaction ID" value="UER00160"/>
</dbReference>
<dbReference type="Proteomes" id="UP000889800">
    <property type="component" value="Chromosome"/>
</dbReference>
<dbReference type="GO" id="GO:0005737">
    <property type="term" value="C:cytoplasm"/>
    <property type="evidence" value="ECO:0007669"/>
    <property type="project" value="UniProtKB-SubCell"/>
</dbReference>
<dbReference type="GO" id="GO:0004015">
    <property type="term" value="F:adenosylmethionine-8-amino-7-oxononanoate transaminase activity"/>
    <property type="evidence" value="ECO:0007669"/>
    <property type="project" value="UniProtKB-UniRule"/>
</dbReference>
<dbReference type="GO" id="GO:0004141">
    <property type="term" value="F:dethiobiotin synthase activity"/>
    <property type="evidence" value="ECO:0007669"/>
    <property type="project" value="TreeGrafter"/>
</dbReference>
<dbReference type="GO" id="GO:0030170">
    <property type="term" value="F:pyridoxal phosphate binding"/>
    <property type="evidence" value="ECO:0007669"/>
    <property type="project" value="UniProtKB-UniRule"/>
</dbReference>
<dbReference type="GO" id="GO:0009102">
    <property type="term" value="P:biotin biosynthetic process"/>
    <property type="evidence" value="ECO:0007669"/>
    <property type="project" value="UniProtKB-UniRule"/>
</dbReference>
<dbReference type="CDD" id="cd00610">
    <property type="entry name" value="OAT_like"/>
    <property type="match status" value="1"/>
</dbReference>
<dbReference type="FunFam" id="3.40.640.10:FF:000004">
    <property type="entry name" value="Acetylornithine aminotransferase"/>
    <property type="match status" value="1"/>
</dbReference>
<dbReference type="Gene3D" id="3.90.1150.10">
    <property type="entry name" value="Aspartate Aminotransferase, domain 1"/>
    <property type="match status" value="1"/>
</dbReference>
<dbReference type="Gene3D" id="3.40.640.10">
    <property type="entry name" value="Type I PLP-dependent aspartate aminotransferase-like (Major domain)"/>
    <property type="match status" value="1"/>
</dbReference>
<dbReference type="HAMAP" id="MF_00834">
    <property type="entry name" value="BioA"/>
    <property type="match status" value="1"/>
</dbReference>
<dbReference type="InterPro" id="IPR005814">
    <property type="entry name" value="Aminotrans_3"/>
</dbReference>
<dbReference type="InterPro" id="IPR049704">
    <property type="entry name" value="Aminotrans_3_PPA_site"/>
</dbReference>
<dbReference type="InterPro" id="IPR005815">
    <property type="entry name" value="BioA"/>
</dbReference>
<dbReference type="InterPro" id="IPR015424">
    <property type="entry name" value="PyrdxlP-dep_Trfase"/>
</dbReference>
<dbReference type="InterPro" id="IPR015421">
    <property type="entry name" value="PyrdxlP-dep_Trfase_major"/>
</dbReference>
<dbReference type="InterPro" id="IPR015422">
    <property type="entry name" value="PyrdxlP-dep_Trfase_small"/>
</dbReference>
<dbReference type="NCBIfam" id="TIGR00508">
    <property type="entry name" value="bioA"/>
    <property type="match status" value="1"/>
</dbReference>
<dbReference type="NCBIfam" id="NF004624">
    <property type="entry name" value="PRK05964.1"/>
    <property type="match status" value="1"/>
</dbReference>
<dbReference type="PANTHER" id="PTHR42684">
    <property type="entry name" value="ADENOSYLMETHIONINE-8-AMINO-7-OXONONANOATE AMINOTRANSFERASE"/>
    <property type="match status" value="1"/>
</dbReference>
<dbReference type="PANTHER" id="PTHR42684:SF3">
    <property type="entry name" value="ADENOSYLMETHIONINE-8-AMINO-7-OXONONANOATE AMINOTRANSFERASE"/>
    <property type="match status" value="1"/>
</dbReference>
<dbReference type="Pfam" id="PF00202">
    <property type="entry name" value="Aminotran_3"/>
    <property type="match status" value="1"/>
</dbReference>
<dbReference type="SUPFAM" id="SSF53383">
    <property type="entry name" value="PLP-dependent transferases"/>
    <property type="match status" value="1"/>
</dbReference>
<dbReference type="PROSITE" id="PS00600">
    <property type="entry name" value="AA_TRANSFER_CLASS_3"/>
    <property type="match status" value="1"/>
</dbReference>
<accession>Q31SA6</accession>
<name>BIOA_SYNE7</name>
<reference key="1">
    <citation type="submission" date="2005-08" db="EMBL/GenBank/DDBJ databases">
        <title>Complete sequence of chromosome 1 of Synechococcus elongatus PCC 7942.</title>
        <authorList>
            <consortium name="US DOE Joint Genome Institute"/>
            <person name="Copeland A."/>
            <person name="Lucas S."/>
            <person name="Lapidus A."/>
            <person name="Barry K."/>
            <person name="Detter J.C."/>
            <person name="Glavina T."/>
            <person name="Hammon N."/>
            <person name="Israni S."/>
            <person name="Pitluck S."/>
            <person name="Schmutz J."/>
            <person name="Larimer F."/>
            <person name="Land M."/>
            <person name="Kyrpides N."/>
            <person name="Lykidis A."/>
            <person name="Golden S."/>
            <person name="Richardson P."/>
        </authorList>
    </citation>
    <scope>NUCLEOTIDE SEQUENCE [LARGE SCALE GENOMIC DNA]</scope>
    <source>
        <strain>ATCC 33912 / PCC 7942 / FACHB-805</strain>
    </source>
</reference>
<reference key="2">
    <citation type="journal article" date="2020" name="Nat. Chem. Biol.">
        <title>A suicide enzyme catalyzes multiple reactions for biotin biosynthesis in cyanobacteria.</title>
        <authorList>
            <person name="Sakaki K."/>
            <person name="Ohishi K."/>
            <person name="Shimizu T."/>
            <person name="Kobayashi I."/>
            <person name="Mori N."/>
            <person name="Matsuda K."/>
            <person name="Tomita T."/>
            <person name="Watanabe H."/>
            <person name="Tanaka K."/>
            <person name="Kuzuyama T."/>
            <person name="Nishiyama M."/>
        </authorList>
    </citation>
    <scope>FUNCTION</scope>
    <source>
        <strain>ATCC 33912 / PCC 7942 / FACHB-805</strain>
    </source>
</reference>
<protein>
    <recommendedName>
        <fullName evidence="1">Adenosylmethionine-8-amino-7-oxononanoate aminotransferase</fullName>
        <ecNumber evidence="1">2.6.1.62</ecNumber>
    </recommendedName>
    <alternativeName>
        <fullName evidence="1">7,8-diamino-pelargonic acid aminotransferase</fullName>
        <shortName evidence="1">DAPA AT</shortName>
        <shortName evidence="1">DAPA aminotransferase</shortName>
    </alternativeName>
    <alternativeName>
        <fullName evidence="1">7,8-diaminononanoate synthase</fullName>
        <shortName evidence="1">DANS</shortName>
    </alternativeName>
    <alternativeName>
        <fullName evidence="1">Diaminopelargonic acid synthase</fullName>
    </alternativeName>
</protein>
<comment type="function">
    <text evidence="1 2">Catalyzes the transfer of the alpha-amino group from S-adenosyl-L-methionine (SAM) to 7-keto-8-aminopelargonic acid (KAPA) to form 7,8-diaminopelargonic acid (DAPA). It is the only aminotransferase known to utilize SAM as an amino donor (By similarity). Complements a bioU deletion in Synechocystis PCC 6803 (PubMed:32042199).</text>
</comment>
<comment type="catalytic activity">
    <reaction evidence="1">
        <text>(8S)-8-amino-7-oxononanoate + S-adenosyl-L-methionine = S-adenosyl-4-methylsulfanyl-2-oxobutanoate + (7R,8S)-7,8-diammoniononanoate</text>
        <dbReference type="Rhea" id="RHEA:16861"/>
        <dbReference type="ChEBI" id="CHEBI:16490"/>
        <dbReference type="ChEBI" id="CHEBI:59789"/>
        <dbReference type="ChEBI" id="CHEBI:149468"/>
        <dbReference type="ChEBI" id="CHEBI:149469"/>
        <dbReference type="EC" id="2.6.1.62"/>
    </reaction>
</comment>
<comment type="cofactor">
    <cofactor evidence="1">
        <name>pyridoxal 5'-phosphate</name>
        <dbReference type="ChEBI" id="CHEBI:597326"/>
    </cofactor>
</comment>
<comment type="pathway">
    <text evidence="1">Cofactor biosynthesis; biotin biosynthesis; 7,8-diaminononanoate from 8-amino-7-oxononanoate (SAM route): step 1/1.</text>
</comment>
<comment type="subunit">
    <text evidence="1">Homodimer.</text>
</comment>
<comment type="subcellular location">
    <subcellularLocation>
        <location evidence="1">Cytoplasm</location>
    </subcellularLocation>
</comment>
<comment type="similarity">
    <text evidence="1">Belongs to the class-III pyridoxal-phosphate-dependent aminotransferase family. BioA subfamily.</text>
</comment>
<keyword id="KW-0032">Aminotransferase</keyword>
<keyword id="KW-0093">Biotin biosynthesis</keyword>
<keyword id="KW-0963">Cytoplasm</keyword>
<keyword id="KW-0663">Pyridoxal phosphate</keyword>
<keyword id="KW-1185">Reference proteome</keyword>
<keyword id="KW-0949">S-adenosyl-L-methionine</keyword>
<keyword id="KW-0808">Transferase</keyword>
<sequence>MPSHPHLWFPFTSVKDAPDPLKVVSGKGARLTLADGRELIDCISSWWVNLHGHAHLRIVEAIAQQAATLEHVIFAGFSHEPAERLAMELCKILPEKLTRVFFSDNGSTAVEVALKMALQYWHNLDQPRSRILAFDGAYHGDTFGAMSVGERSLFNAPFEKLLFSVEFLPYPETWWGDETVEAKEAAAIAAVEQALAAGDVAAVIIEPLVQGAGGMRMARPQFLQQLAARVQAAGSLLIADEVMTGFGRTGAWFACQRAGIQPDLICLSKGLTGGFLPLSITVATEVIYDTFCSGNPDHTFYHGHSYTANPLGCAAAIASLELLLDSEAIVQGLEDAHLPGLELLAQHPKVTRPRLTGGIAACDLVSDRGGYLDPIGLRVRQAAIARGLLLRPLGNVLYLLPPYCLTPTELQDIYAAIADLLDEI</sequence>